<dbReference type="EC" id="3.1.4.53"/>
<dbReference type="EMBL" id="AE014298">
    <property type="protein sequence ID" value="AAF45863.2"/>
    <property type="molecule type" value="Genomic_DNA"/>
</dbReference>
<dbReference type="EMBL" id="AE014298">
    <property type="protein sequence ID" value="AAN09605.2"/>
    <property type="molecule type" value="Genomic_DNA"/>
</dbReference>
<dbReference type="EMBL" id="AL121800">
    <property type="protein sequence ID" value="CAB57995.1"/>
    <property type="status" value="ALT_SEQ"/>
    <property type="molecule type" value="Genomic_DNA"/>
</dbReference>
<dbReference type="RefSeq" id="NP_726856.1">
    <molecule id="Q9W4S9-1"/>
    <property type="nucleotide sequence ID" value="NM_166968.3"/>
</dbReference>
<dbReference type="RefSeq" id="NP_726858.2">
    <molecule id="Q9W4S9-2"/>
    <property type="nucleotide sequence ID" value="NM_166970.2"/>
</dbReference>
<dbReference type="SMR" id="Q9W4S9"/>
<dbReference type="BioGRID" id="57834">
    <property type="interactions" value="19"/>
</dbReference>
<dbReference type="IntAct" id="Q9W4S9">
    <property type="interactions" value="2"/>
</dbReference>
<dbReference type="DNASU" id="31309"/>
<dbReference type="EnsemblMetazoa" id="FBtr0070519">
    <molecule id="Q9W4S9-1"/>
    <property type="protein sequence ID" value="FBpp0070495"/>
    <property type="gene ID" value="FBgn0000479"/>
</dbReference>
<dbReference type="EnsemblMetazoa" id="FBtr0070520">
    <molecule id="Q9W4S9-2"/>
    <property type="protein sequence ID" value="FBpp0070496"/>
    <property type="gene ID" value="FBgn0000479"/>
</dbReference>
<dbReference type="GeneID" id="31309"/>
<dbReference type="UCSC" id="CG32498-RA">
    <molecule id="Q9W4S9-1"/>
    <property type="organism name" value="d. melanogaster"/>
</dbReference>
<dbReference type="AGR" id="FB:FBgn0000479"/>
<dbReference type="CTD" id="31309"/>
<dbReference type="FlyBase" id="FBgn0000479">
    <property type="gene designation" value="dnc"/>
</dbReference>
<dbReference type="VEuPathDB" id="VectorBase:FBgn0000479"/>
<dbReference type="GeneTree" id="ENSGT00940000155190"/>
<dbReference type="HOGENOM" id="CLU_005940_3_0_1"/>
<dbReference type="OMA" id="ANTCFEV"/>
<dbReference type="OrthoDB" id="189220at2759"/>
<dbReference type="UniPathway" id="UPA00762">
    <property type="reaction ID" value="UER00747"/>
</dbReference>
<dbReference type="BioGRID-ORCS" id="31309">
    <property type="hits" value="1 hit in 3 CRISPR screens"/>
</dbReference>
<dbReference type="ChiTaRS" id="dnc">
    <property type="organism name" value="fly"/>
</dbReference>
<dbReference type="GenomeRNAi" id="31309"/>
<dbReference type="Proteomes" id="UP000000803">
    <property type="component" value="Chromosome X"/>
</dbReference>
<dbReference type="Bgee" id="FBgn0000479">
    <property type="expression patterns" value="Expressed in muscle cell in antenna and 285 other cell types or tissues"/>
</dbReference>
<dbReference type="ExpressionAtlas" id="Q9W4S9">
    <property type="expression patterns" value="baseline and differential"/>
</dbReference>
<dbReference type="GO" id="GO:0045202">
    <property type="term" value="C:synapse"/>
    <property type="evidence" value="ECO:0007669"/>
    <property type="project" value="GOC"/>
</dbReference>
<dbReference type="GO" id="GO:0004115">
    <property type="term" value="F:3',5'-cyclic-AMP phosphodiesterase activity"/>
    <property type="evidence" value="ECO:0000250"/>
    <property type="project" value="FlyBase"/>
</dbReference>
<dbReference type="GO" id="GO:0047555">
    <property type="term" value="F:3',5'-cyclic-GMP phosphodiesterase activity"/>
    <property type="evidence" value="ECO:0000318"/>
    <property type="project" value="GO_Central"/>
</dbReference>
<dbReference type="GO" id="GO:0046872">
    <property type="term" value="F:metal ion binding"/>
    <property type="evidence" value="ECO:0007669"/>
    <property type="project" value="UniProtKB-KW"/>
</dbReference>
<dbReference type="GO" id="GO:0007615">
    <property type="term" value="P:anesthesia-resistant memory"/>
    <property type="evidence" value="ECO:0000315"/>
    <property type="project" value="FlyBase"/>
</dbReference>
<dbReference type="GO" id="GO:0008306">
    <property type="term" value="P:associative learning"/>
    <property type="evidence" value="ECO:0000315"/>
    <property type="project" value="FlyBase"/>
</dbReference>
<dbReference type="GO" id="GO:0048675">
    <property type="term" value="P:axon extension"/>
    <property type="evidence" value="ECO:0000315"/>
    <property type="project" value="FlyBase"/>
</dbReference>
<dbReference type="GO" id="GO:0006198">
    <property type="term" value="P:cAMP catabolic process"/>
    <property type="evidence" value="ECO:0007669"/>
    <property type="project" value="UniProtKB-UniPathway"/>
</dbReference>
<dbReference type="GO" id="GO:0019933">
    <property type="term" value="P:cAMP-mediated signaling"/>
    <property type="evidence" value="ECO:0000318"/>
    <property type="project" value="GO_Central"/>
</dbReference>
<dbReference type="GO" id="GO:0007268">
    <property type="term" value="P:chemical synaptic transmission"/>
    <property type="evidence" value="ECO:0000315"/>
    <property type="project" value="FlyBase"/>
</dbReference>
<dbReference type="GO" id="GO:0007623">
    <property type="term" value="P:circadian rhythm"/>
    <property type="evidence" value="ECO:0000304"/>
    <property type="project" value="FlyBase"/>
</dbReference>
<dbReference type="GO" id="GO:0001661">
    <property type="term" value="P:conditioned taste aversion"/>
    <property type="evidence" value="ECO:0000315"/>
    <property type="project" value="FlyBase"/>
</dbReference>
<dbReference type="GO" id="GO:0007619">
    <property type="term" value="P:courtship behavior"/>
    <property type="evidence" value="ECO:0000304"/>
    <property type="project" value="FlyBase"/>
</dbReference>
<dbReference type="GO" id="GO:0007612">
    <property type="term" value="P:learning"/>
    <property type="evidence" value="ECO:0000315"/>
    <property type="project" value="FlyBase"/>
</dbReference>
<dbReference type="GO" id="GO:0007617">
    <property type="term" value="P:mating behavior"/>
    <property type="evidence" value="ECO:0000304"/>
    <property type="project" value="FlyBase"/>
</dbReference>
<dbReference type="GO" id="GO:0007613">
    <property type="term" value="P:memory"/>
    <property type="evidence" value="ECO:0000315"/>
    <property type="project" value="FlyBase"/>
</dbReference>
<dbReference type="GO" id="GO:0046958">
    <property type="term" value="P:nonassociative learning"/>
    <property type="evidence" value="ECO:0000304"/>
    <property type="project" value="FlyBase"/>
</dbReference>
<dbReference type="GO" id="GO:0008355">
    <property type="term" value="P:olfactory learning"/>
    <property type="evidence" value="ECO:0000304"/>
    <property type="project" value="FlyBase"/>
</dbReference>
<dbReference type="GO" id="GO:0007614">
    <property type="term" value="P:short-term memory"/>
    <property type="evidence" value="ECO:0000315"/>
    <property type="project" value="FlyBase"/>
</dbReference>
<dbReference type="GO" id="GO:0040040">
    <property type="term" value="P:thermosensory behavior"/>
    <property type="evidence" value="ECO:0000315"/>
    <property type="project" value="FlyBase"/>
</dbReference>
<dbReference type="CDD" id="cd00077">
    <property type="entry name" value="HDc"/>
    <property type="match status" value="1"/>
</dbReference>
<dbReference type="FunFam" id="1.10.1300.10:FF:000001">
    <property type="entry name" value="Phosphodiesterase"/>
    <property type="match status" value="1"/>
</dbReference>
<dbReference type="Gene3D" id="1.10.1300.10">
    <property type="entry name" value="3'5'-cyclic nucleotide phosphodiesterase, catalytic domain"/>
    <property type="match status" value="1"/>
</dbReference>
<dbReference type="InterPro" id="IPR003607">
    <property type="entry name" value="HD/PDEase_dom"/>
</dbReference>
<dbReference type="InterPro" id="IPR040844">
    <property type="entry name" value="PDE4_UCR"/>
</dbReference>
<dbReference type="InterPro" id="IPR023088">
    <property type="entry name" value="PDEase"/>
</dbReference>
<dbReference type="InterPro" id="IPR002073">
    <property type="entry name" value="PDEase_catalytic_dom"/>
</dbReference>
<dbReference type="InterPro" id="IPR036971">
    <property type="entry name" value="PDEase_catalytic_dom_sf"/>
</dbReference>
<dbReference type="InterPro" id="IPR023174">
    <property type="entry name" value="PDEase_CS"/>
</dbReference>
<dbReference type="PANTHER" id="PTHR11347">
    <property type="entry name" value="CYCLIC NUCLEOTIDE PHOSPHODIESTERASE"/>
    <property type="match status" value="1"/>
</dbReference>
<dbReference type="Pfam" id="PF18100">
    <property type="entry name" value="PDE4_UCR"/>
    <property type="match status" value="1"/>
</dbReference>
<dbReference type="Pfam" id="PF00233">
    <property type="entry name" value="PDEase_I"/>
    <property type="match status" value="1"/>
</dbReference>
<dbReference type="PRINTS" id="PR00387">
    <property type="entry name" value="PDIESTERASE1"/>
</dbReference>
<dbReference type="SUPFAM" id="SSF109604">
    <property type="entry name" value="HD-domain/PDEase-like"/>
    <property type="match status" value="1"/>
</dbReference>
<dbReference type="PROSITE" id="PS00126">
    <property type="entry name" value="PDEASE_I_1"/>
    <property type="match status" value="1"/>
</dbReference>
<dbReference type="PROSITE" id="PS51845">
    <property type="entry name" value="PDEASE_I_2"/>
    <property type="match status" value="1"/>
</dbReference>
<name>PDE4C_DROME</name>
<reference evidence="8" key="1">
    <citation type="journal article" date="2000" name="Science">
        <title>The genome sequence of Drosophila melanogaster.</title>
        <authorList>
            <person name="Adams M.D."/>
            <person name="Celniker S.E."/>
            <person name="Holt R.A."/>
            <person name="Evans C.A."/>
            <person name="Gocayne J.D."/>
            <person name="Amanatides P.G."/>
            <person name="Scherer S.E."/>
            <person name="Li P.W."/>
            <person name="Hoskins R.A."/>
            <person name="Galle R.F."/>
            <person name="George R.A."/>
            <person name="Lewis S.E."/>
            <person name="Richards S."/>
            <person name="Ashburner M."/>
            <person name="Henderson S.N."/>
            <person name="Sutton G.G."/>
            <person name="Wortman J.R."/>
            <person name="Yandell M.D."/>
            <person name="Zhang Q."/>
            <person name="Chen L.X."/>
            <person name="Brandon R.C."/>
            <person name="Rogers Y.-H.C."/>
            <person name="Blazej R.G."/>
            <person name="Champe M."/>
            <person name="Pfeiffer B.D."/>
            <person name="Wan K.H."/>
            <person name="Doyle C."/>
            <person name="Baxter E.G."/>
            <person name="Helt G."/>
            <person name="Nelson C.R."/>
            <person name="Miklos G.L.G."/>
            <person name="Abril J.F."/>
            <person name="Agbayani A."/>
            <person name="An H.-J."/>
            <person name="Andrews-Pfannkoch C."/>
            <person name="Baldwin D."/>
            <person name="Ballew R.M."/>
            <person name="Basu A."/>
            <person name="Baxendale J."/>
            <person name="Bayraktaroglu L."/>
            <person name="Beasley E.M."/>
            <person name="Beeson K.Y."/>
            <person name="Benos P.V."/>
            <person name="Berman B.P."/>
            <person name="Bhandari D."/>
            <person name="Bolshakov S."/>
            <person name="Borkova D."/>
            <person name="Botchan M.R."/>
            <person name="Bouck J."/>
            <person name="Brokstein P."/>
            <person name="Brottier P."/>
            <person name="Burtis K.C."/>
            <person name="Busam D.A."/>
            <person name="Butler H."/>
            <person name="Cadieu E."/>
            <person name="Center A."/>
            <person name="Chandra I."/>
            <person name="Cherry J.M."/>
            <person name="Cawley S."/>
            <person name="Dahlke C."/>
            <person name="Davenport L.B."/>
            <person name="Davies P."/>
            <person name="de Pablos B."/>
            <person name="Delcher A."/>
            <person name="Deng Z."/>
            <person name="Mays A.D."/>
            <person name="Dew I."/>
            <person name="Dietz S.M."/>
            <person name="Dodson K."/>
            <person name="Doup L.E."/>
            <person name="Downes M."/>
            <person name="Dugan-Rocha S."/>
            <person name="Dunkov B.C."/>
            <person name="Dunn P."/>
            <person name="Durbin K.J."/>
            <person name="Evangelista C.C."/>
            <person name="Ferraz C."/>
            <person name="Ferriera S."/>
            <person name="Fleischmann W."/>
            <person name="Fosler C."/>
            <person name="Gabrielian A.E."/>
            <person name="Garg N.S."/>
            <person name="Gelbart W.M."/>
            <person name="Glasser K."/>
            <person name="Glodek A."/>
            <person name="Gong F."/>
            <person name="Gorrell J.H."/>
            <person name="Gu Z."/>
            <person name="Guan P."/>
            <person name="Harris M."/>
            <person name="Harris N.L."/>
            <person name="Harvey D.A."/>
            <person name="Heiman T.J."/>
            <person name="Hernandez J.R."/>
            <person name="Houck J."/>
            <person name="Hostin D."/>
            <person name="Houston K.A."/>
            <person name="Howland T.J."/>
            <person name="Wei M.-H."/>
            <person name="Ibegwam C."/>
            <person name="Jalali M."/>
            <person name="Kalush F."/>
            <person name="Karpen G.H."/>
            <person name="Ke Z."/>
            <person name="Kennison J.A."/>
            <person name="Ketchum K.A."/>
            <person name="Kimmel B.E."/>
            <person name="Kodira C.D."/>
            <person name="Kraft C.L."/>
            <person name="Kravitz S."/>
            <person name="Kulp D."/>
            <person name="Lai Z."/>
            <person name="Lasko P."/>
            <person name="Lei Y."/>
            <person name="Levitsky A.A."/>
            <person name="Li J.H."/>
            <person name="Li Z."/>
            <person name="Liang Y."/>
            <person name="Lin X."/>
            <person name="Liu X."/>
            <person name="Mattei B."/>
            <person name="McIntosh T.C."/>
            <person name="McLeod M.P."/>
            <person name="McPherson D."/>
            <person name="Merkulov G."/>
            <person name="Milshina N.V."/>
            <person name="Mobarry C."/>
            <person name="Morris J."/>
            <person name="Moshrefi A."/>
            <person name="Mount S.M."/>
            <person name="Moy M."/>
            <person name="Murphy B."/>
            <person name="Murphy L."/>
            <person name="Muzny D.M."/>
            <person name="Nelson D.L."/>
            <person name="Nelson D.R."/>
            <person name="Nelson K.A."/>
            <person name="Nixon K."/>
            <person name="Nusskern D.R."/>
            <person name="Pacleb J.M."/>
            <person name="Palazzolo M."/>
            <person name="Pittman G.S."/>
            <person name="Pan S."/>
            <person name="Pollard J."/>
            <person name="Puri V."/>
            <person name="Reese M.G."/>
            <person name="Reinert K."/>
            <person name="Remington K."/>
            <person name="Saunders R.D.C."/>
            <person name="Scheeler F."/>
            <person name="Shen H."/>
            <person name="Shue B.C."/>
            <person name="Siden-Kiamos I."/>
            <person name="Simpson M."/>
            <person name="Skupski M.P."/>
            <person name="Smith T.J."/>
            <person name="Spier E."/>
            <person name="Spradling A.C."/>
            <person name="Stapleton M."/>
            <person name="Strong R."/>
            <person name="Sun E."/>
            <person name="Svirskas R."/>
            <person name="Tector C."/>
            <person name="Turner R."/>
            <person name="Venter E."/>
            <person name="Wang A.H."/>
            <person name="Wang X."/>
            <person name="Wang Z.-Y."/>
            <person name="Wassarman D.A."/>
            <person name="Weinstock G.M."/>
            <person name="Weissenbach J."/>
            <person name="Williams S.M."/>
            <person name="Woodage T."/>
            <person name="Worley K.C."/>
            <person name="Wu D."/>
            <person name="Yang S."/>
            <person name="Yao Q.A."/>
            <person name="Ye J."/>
            <person name="Yeh R.-F."/>
            <person name="Zaveri J.S."/>
            <person name="Zhan M."/>
            <person name="Zhang G."/>
            <person name="Zhao Q."/>
            <person name="Zheng L."/>
            <person name="Zheng X.H."/>
            <person name="Zhong F.N."/>
            <person name="Zhong W."/>
            <person name="Zhou X."/>
            <person name="Zhu S.C."/>
            <person name="Zhu X."/>
            <person name="Smith H.O."/>
            <person name="Gibbs R.A."/>
            <person name="Myers E.W."/>
            <person name="Rubin G.M."/>
            <person name="Venter J.C."/>
        </authorList>
    </citation>
    <scope>NUCLEOTIDE SEQUENCE [LARGE SCALE GENOMIC DNA]</scope>
    <source>
        <strain evidence="5">Berkeley</strain>
    </source>
</reference>
<reference evidence="7 8" key="2">
    <citation type="journal article" date="2002" name="Genome Biol.">
        <title>Annotation of the Drosophila melanogaster euchromatic genome: a systematic review.</title>
        <authorList>
            <person name="Misra S."/>
            <person name="Crosby M.A."/>
            <person name="Mungall C.J."/>
            <person name="Matthews B.B."/>
            <person name="Campbell K.S."/>
            <person name="Hradecky P."/>
            <person name="Huang Y."/>
            <person name="Kaminker J.S."/>
            <person name="Millburn G.H."/>
            <person name="Prochnik S.E."/>
            <person name="Smith C.D."/>
            <person name="Tupy J.L."/>
            <person name="Whitfield E.J."/>
            <person name="Bayraktaroglu L."/>
            <person name="Berman B.P."/>
            <person name="Bettencourt B.R."/>
            <person name="Celniker S.E."/>
            <person name="de Grey A.D.N.J."/>
            <person name="Drysdale R.A."/>
            <person name="Harris N.L."/>
            <person name="Richter J."/>
            <person name="Russo S."/>
            <person name="Schroeder A.J."/>
            <person name="Shu S.Q."/>
            <person name="Stapleton M."/>
            <person name="Yamada C."/>
            <person name="Ashburner M."/>
            <person name="Gelbart W.M."/>
            <person name="Rubin G.M."/>
            <person name="Lewis S.E."/>
        </authorList>
    </citation>
    <scope>GENOME REANNOTATION</scope>
    <scope>ALTERNATIVE SPLICING</scope>
    <source>
        <strain>Berkeley</strain>
    </source>
</reference>
<reference key="3">
    <citation type="journal article" date="2000" name="Science">
        <title>From sequence to chromosome: the tip of the X chromosome of D. melanogaster.</title>
        <authorList>
            <person name="Benos P.V."/>
            <person name="Gatt M.K."/>
            <person name="Ashburner M."/>
            <person name="Murphy L."/>
            <person name="Harris D."/>
            <person name="Barrell B.G."/>
            <person name="Ferraz C."/>
            <person name="Vidal S."/>
            <person name="Brun C."/>
            <person name="Demailles J."/>
            <person name="Cadieu E."/>
            <person name="Dreano S."/>
            <person name="Gloux S."/>
            <person name="Lelaure V."/>
            <person name="Mottier S."/>
            <person name="Galibert F."/>
            <person name="Borkova D."/>
            <person name="Minana B."/>
            <person name="Kafatos F.C."/>
            <person name="Louis C."/>
            <person name="Siden-Kiamos I."/>
            <person name="Bolshakov S."/>
            <person name="Papagiannakis G."/>
            <person name="Spanos L."/>
            <person name="Cox S."/>
            <person name="Madueno E."/>
            <person name="de Pablos B."/>
            <person name="Modolell J."/>
            <person name="Peter A."/>
            <person name="Schoettler P."/>
            <person name="Werner M."/>
            <person name="Mourkioti F."/>
            <person name="Beinert N."/>
            <person name="Dowe G."/>
            <person name="Schaefer U."/>
            <person name="Jaeckle H."/>
            <person name="Bucheton A."/>
            <person name="Callister D.M."/>
            <person name="Campbell L.A."/>
            <person name="Darlamitsou A."/>
            <person name="Henderson N.S."/>
            <person name="McMillan P.J."/>
            <person name="Salles C."/>
            <person name="Tait E.A."/>
            <person name="Valenti P."/>
            <person name="Saunders R.D.C."/>
            <person name="Glover D.M."/>
        </authorList>
    </citation>
    <scope>NUCLEOTIDE SEQUENCE [LARGE SCALE GENOMIC DNA] OF 170-479</scope>
    <source>
        <strain>Oregon-R</strain>
    </source>
</reference>
<feature type="chain" id="PRO_0000198818" description="3',5'-cyclic-AMP phosphodiesterase, isoforms N/G">
    <location>
        <begin position="1"/>
        <end position="983"/>
    </location>
</feature>
<feature type="domain" description="PDEase" evidence="3">
    <location>
        <begin position="569"/>
        <end position="898"/>
    </location>
</feature>
<feature type="region of interest" description="Disordered" evidence="4">
    <location>
        <begin position="31"/>
        <end position="333"/>
    </location>
</feature>
<feature type="region of interest" description="Disordered" evidence="4">
    <location>
        <begin position="349"/>
        <end position="370"/>
    </location>
</feature>
<feature type="region of interest" description="Disordered" evidence="4">
    <location>
        <begin position="400"/>
        <end position="429"/>
    </location>
</feature>
<feature type="region of interest" description="Disordered" evidence="4">
    <location>
        <begin position="528"/>
        <end position="566"/>
    </location>
</feature>
<feature type="region of interest" description="Disordered" evidence="4">
    <location>
        <begin position="920"/>
        <end position="983"/>
    </location>
</feature>
<feature type="compositionally biased region" description="Basic and acidic residues" evidence="4">
    <location>
        <begin position="35"/>
        <end position="50"/>
    </location>
</feature>
<feature type="compositionally biased region" description="Polar residues" evidence="4">
    <location>
        <begin position="51"/>
        <end position="60"/>
    </location>
</feature>
<feature type="compositionally biased region" description="Gly residues" evidence="4">
    <location>
        <begin position="84"/>
        <end position="97"/>
    </location>
</feature>
<feature type="compositionally biased region" description="Low complexity" evidence="4">
    <location>
        <begin position="112"/>
        <end position="121"/>
    </location>
</feature>
<feature type="compositionally biased region" description="Low complexity" evidence="4">
    <location>
        <begin position="145"/>
        <end position="167"/>
    </location>
</feature>
<feature type="compositionally biased region" description="Acidic residues" evidence="4">
    <location>
        <begin position="174"/>
        <end position="199"/>
    </location>
</feature>
<feature type="compositionally biased region" description="Low complexity" evidence="4">
    <location>
        <begin position="219"/>
        <end position="234"/>
    </location>
</feature>
<feature type="compositionally biased region" description="Low complexity" evidence="4">
    <location>
        <begin position="248"/>
        <end position="261"/>
    </location>
</feature>
<feature type="compositionally biased region" description="Polar residues" evidence="4">
    <location>
        <begin position="268"/>
        <end position="287"/>
    </location>
</feature>
<feature type="compositionally biased region" description="Polar residues" evidence="4">
    <location>
        <begin position="358"/>
        <end position="368"/>
    </location>
</feature>
<feature type="compositionally biased region" description="Polar residues" evidence="4">
    <location>
        <begin position="401"/>
        <end position="419"/>
    </location>
</feature>
<feature type="compositionally biased region" description="Acidic residues" evidence="4">
    <location>
        <begin position="920"/>
        <end position="937"/>
    </location>
</feature>
<feature type="compositionally biased region" description="Low complexity" evidence="4">
    <location>
        <begin position="938"/>
        <end position="955"/>
    </location>
</feature>
<feature type="compositionally biased region" description="Gly residues" evidence="4">
    <location>
        <begin position="956"/>
        <end position="967"/>
    </location>
</feature>
<feature type="compositionally biased region" description="Polar residues" evidence="4">
    <location>
        <begin position="973"/>
        <end position="983"/>
    </location>
</feature>
<feature type="active site" description="Proton donor" evidence="1">
    <location>
        <position position="645"/>
    </location>
</feature>
<feature type="binding site" evidence="1">
    <location>
        <begin position="645"/>
        <end position="649"/>
    </location>
    <ligand>
        <name>3',5'-cyclic AMP</name>
        <dbReference type="ChEBI" id="CHEBI:58165"/>
    </ligand>
</feature>
<feature type="binding site" evidence="1">
    <location>
        <position position="649"/>
    </location>
    <ligand>
        <name>a divalent metal cation</name>
        <dbReference type="ChEBI" id="CHEBI:60240"/>
        <label>1</label>
    </ligand>
</feature>
<feature type="binding site" evidence="1">
    <location>
        <position position="685"/>
    </location>
    <ligand>
        <name>a divalent metal cation</name>
        <dbReference type="ChEBI" id="CHEBI:60240"/>
        <label>1</label>
    </ligand>
</feature>
<feature type="binding site" evidence="1">
    <location>
        <position position="686"/>
    </location>
    <ligand>
        <name>3',5'-cyclic AMP</name>
        <dbReference type="ChEBI" id="CHEBI:58165"/>
    </ligand>
</feature>
<feature type="binding site" evidence="1">
    <location>
        <position position="686"/>
    </location>
    <ligand>
        <name>a divalent metal cation</name>
        <dbReference type="ChEBI" id="CHEBI:60240"/>
        <label>1</label>
    </ligand>
</feature>
<feature type="binding site" evidence="1">
    <location>
        <position position="686"/>
    </location>
    <ligand>
        <name>a divalent metal cation</name>
        <dbReference type="ChEBI" id="CHEBI:60240"/>
        <label>2</label>
    </ligand>
</feature>
<feature type="binding site" evidence="1">
    <location>
        <position position="803"/>
    </location>
    <ligand>
        <name>3',5'-cyclic AMP</name>
        <dbReference type="ChEBI" id="CHEBI:58165"/>
    </ligand>
</feature>
<feature type="binding site" evidence="1">
    <location>
        <position position="803"/>
    </location>
    <ligand>
        <name>a divalent metal cation</name>
        <dbReference type="ChEBI" id="CHEBI:60240"/>
        <label>1</label>
    </ligand>
</feature>
<feature type="binding site" evidence="1">
    <location>
        <position position="854"/>
    </location>
    <ligand>
        <name>3',5'-cyclic AMP</name>
        <dbReference type="ChEBI" id="CHEBI:58165"/>
    </ligand>
</feature>
<feature type="site" description="Binds AMP, but not cAMP" evidence="1">
    <location>
        <position position="806"/>
    </location>
</feature>
<feature type="splice variant" id="VSP_051775" description="In isoform G." evidence="6">
    <location>
        <begin position="1"/>
        <end position="169"/>
    </location>
</feature>
<keyword id="KW-0024">Alternative initiation</keyword>
<keyword id="KW-0025">Alternative splicing</keyword>
<keyword id="KW-0114">cAMP</keyword>
<keyword id="KW-0378">Hydrolase</keyword>
<keyword id="KW-0479">Metal-binding</keyword>
<keyword id="KW-1185">Reference proteome</keyword>
<sequence>MIATLFIIFAFIRAFPWSRKRGRPALALTLMPEGGEDHRGDLNQKGENNNRPRPSISLANNGEAMAPRTRRKSSKFHEVTFSGSVGGGDSDGGGEAINGGNLDVSPSKRHSLSTTTSNSSSAPYRYLSGSSRSRGSRGDCHEYYQLQQHSSSLSNGNRGNRGLSQRSDTMATEAEGEEFDVDPMDEDDEDQTYDRETEEFYSNIQDAAGTGSSSRSKRSSLFSRSDSSATTTSSSGGGTFTGGKRRSAASILSSSMCSDLMTSDRRSSTATEYSVKSVTTGNTSQRRSSGRIRRYVSRMTIAGARRRTTGSFDVENGQGARSPLEGGSPSAGLVLQNLPQRRESFLYRSDSDFEMSPKSMSRNSSIASESHGEDLIVTPFAQILASLRSVRNNLLSLTNVPASNKSRRPNQSSSASRSGNPPGAPLSQGEEAYTRLATDTIEELDWCLDQLETIQTHRSVSDMASLKFKRMLNKELSHFSESSRSGNQISEYICSTFLDKQQEFDLPSLRVEDNPELVAANAAAGQQSAGQYARSRSPRGPPMSQISGVKRPLSHTNSFTGERLPTFGVETPRENELGTLLGELDTWGIQIFSIGEFSVNRPLTCVAYTIFQSRELLTSLMIPPKTFLNFMSTLEDHYVKDNPFHNSLHAADVTQSTNVLLNTPALEGVFTPLEVGGALFAACIHDVDHPGLTNQFLVNSSSELALMYNDESVLENHHLAVAFKLLQNQGCDIFCNMQKKQRQTLRKMVIDIVLSTDMSKHMSLLADLKTMVETKKVAGSGVLLLDNYTDRIQVLENLVHCADLSNPTKPLPLYKRWVALLMEEFFLQGDKERESGMDISPMCDRHNATIEKSQVGFIDYIVHPLWETWADLVHPDAQDILDTLEENRDYYQSMIPPSPPPSGVDENPQEDRIRFQVTLEESDQENLAELEEGDESGGESTTTGTTGTTAASALSGAGGGGGGGGGMAPRTGGCQNQPQHGGM</sequence>
<protein>
    <recommendedName>
        <fullName evidence="7">3',5'-cyclic-AMP phosphodiesterase, isoforms N/G</fullName>
        <ecNumber>3.1.4.53</ecNumber>
    </recommendedName>
    <alternativeName>
        <fullName>Learning/memory process protein</fullName>
    </alternativeName>
    <alternativeName>
        <fullName>Protein dunce</fullName>
    </alternativeName>
    <alternativeName>
        <fullName evidence="7">cAMP-specific phosphodiesterase, isoforms N/G</fullName>
    </alternativeName>
</protein>
<evidence type="ECO:0000250" key="1"/>
<evidence type="ECO:0000250" key="2">
    <source>
        <dbReference type="UniProtKB" id="P12252"/>
    </source>
</evidence>
<evidence type="ECO:0000255" key="3">
    <source>
        <dbReference type="PROSITE-ProRule" id="PRU01192"/>
    </source>
</evidence>
<evidence type="ECO:0000256" key="4">
    <source>
        <dbReference type="SAM" id="MobiDB-lite"/>
    </source>
</evidence>
<evidence type="ECO:0000269" key="5">
    <source>
    </source>
</evidence>
<evidence type="ECO:0000303" key="6">
    <source>
    </source>
</evidence>
<evidence type="ECO:0000305" key="7"/>
<evidence type="ECO:0000312" key="8">
    <source>
        <dbReference type="EMBL" id="AAF45863.2"/>
    </source>
</evidence>
<accession>Q9W4S9</accession>
<accession>Q8IRU5</accession>
<organism>
    <name type="scientific">Drosophila melanogaster</name>
    <name type="common">Fruit fly</name>
    <dbReference type="NCBI Taxonomy" id="7227"/>
    <lineage>
        <taxon>Eukaryota</taxon>
        <taxon>Metazoa</taxon>
        <taxon>Ecdysozoa</taxon>
        <taxon>Arthropoda</taxon>
        <taxon>Hexapoda</taxon>
        <taxon>Insecta</taxon>
        <taxon>Pterygota</taxon>
        <taxon>Neoptera</taxon>
        <taxon>Endopterygota</taxon>
        <taxon>Diptera</taxon>
        <taxon>Brachycera</taxon>
        <taxon>Muscomorpha</taxon>
        <taxon>Ephydroidea</taxon>
        <taxon>Drosophilidae</taxon>
        <taxon>Drosophila</taxon>
        <taxon>Sophophora</taxon>
    </lineage>
</organism>
<proteinExistence type="inferred from homology"/>
<comment type="function">
    <text evidence="1">Hydrolyzes the second messenger cAMP, which is a key regulator of many important physiological processes (By similarity). Vital for female fertility. Required for learning/memory (By similarity).</text>
</comment>
<comment type="catalytic activity">
    <reaction evidence="2">
        <text>3',5'-cyclic AMP + H2O = AMP + H(+)</text>
        <dbReference type="Rhea" id="RHEA:25277"/>
        <dbReference type="ChEBI" id="CHEBI:15377"/>
        <dbReference type="ChEBI" id="CHEBI:15378"/>
        <dbReference type="ChEBI" id="CHEBI:58165"/>
        <dbReference type="ChEBI" id="CHEBI:456215"/>
        <dbReference type="EC" id="3.1.4.53"/>
    </reaction>
</comment>
<comment type="cofactor">
    <cofactor evidence="1">
        <name>a divalent metal cation</name>
        <dbReference type="ChEBI" id="CHEBI:60240"/>
    </cofactor>
    <text evidence="1">Binds 2 divalent metal cations per subunit. Site 1 may preferentially bind zinc ions, while site 2 has a preference for magnesium and/or manganese ions.</text>
</comment>
<comment type="pathway">
    <text>Purine metabolism; 3',5'-cyclic AMP degradation; AMP from 3',5'-cyclic AMP: step 1/1.</text>
</comment>
<comment type="subunit">
    <text evidence="2">Monomer.</text>
</comment>
<comment type="alternative products">
    <event type="alternative splicing"/>
    <event type="alternative initiation"/>
    <isoform>
        <id>Q9W4S9-1</id>
        <name evidence="6">N</name>
        <sequence type="displayed"/>
    </isoform>
    <isoform>
        <id>Q9W4S9-2</id>
        <name evidence="6">G</name>
        <sequence type="described" ref="VSP_051775"/>
    </isoform>
    <isoform>
        <id>Q8IRU4-1</id>
        <name evidence="6">F</name>
        <sequence type="external"/>
    </isoform>
    <isoform>
        <id>Q9W4T4-1</id>
        <name evidence="2">I</name>
        <name evidence="6">B</name>
        <name>S</name>
        <sequence type="external"/>
    </isoform>
    <isoform>
        <id>P12252-1</id>
        <name evidence="2">II</name>
        <name evidence="6">I</name>
        <name evidence="6">J</name>
        <sequence type="external"/>
    </isoform>
    <isoform>
        <id>P12252-7</id>
        <name>III</name>
        <name>E</name>
        <name>P</name>
        <sequence type="external"/>
    </isoform>
    <isoform>
        <id>P12252-3</id>
        <name evidence="2">IV</name>
        <name evidence="6">A</name>
        <sequence type="external"/>
    </isoform>
    <isoform>
        <id>P12252-4</id>
        <name evidence="2">V</name>
        <name evidence="6">C</name>
        <sequence type="external"/>
    </isoform>
    <isoform>
        <id>P12252-5</id>
        <name evidence="2">VI</name>
        <name evidence="6">D</name>
        <sequence type="external"/>
    </isoform>
    <isoform>
        <id>P12252-6</id>
        <name evidence="2">VII</name>
        <name evidence="6">L</name>
        <sequence type="external"/>
    </isoform>
    <isoform>
        <id>P12252-8</id>
        <id>Q9W4T0-1</id>
        <name>R</name>
        <name>Q</name>
        <sequence type="external"/>
    </isoform>
    <isoform>
        <id>P12252-9</id>
        <name>U</name>
        <name>T</name>
        <sequence type="external"/>
    </isoform>
</comment>
<comment type="similarity">
    <text evidence="7">Belongs to the cyclic nucleotide phosphodiesterase family. PDE4 subfamily.</text>
</comment>
<comment type="sequence caution" evidence="7">
    <conflict type="erroneous gene model prediction">
        <sequence resource="EMBL-CDS" id="CAB57995"/>
    </conflict>
</comment>
<gene>
    <name evidence="8" type="primary">dnc</name>
    <name type="ORF">CG32498</name>
</gene>